<protein>
    <recommendedName>
        <fullName evidence="1">Maturase K</fullName>
    </recommendedName>
    <alternativeName>
        <fullName evidence="1">Intron maturase</fullName>
    </alternativeName>
</protein>
<name>MATK_ZANAE</name>
<gene>
    <name evidence="1" type="primary">matK</name>
</gene>
<keyword id="KW-0150">Chloroplast</keyword>
<keyword id="KW-0507">mRNA processing</keyword>
<keyword id="KW-0934">Plastid</keyword>
<keyword id="KW-0694">RNA-binding</keyword>
<keyword id="KW-0819">tRNA processing</keyword>
<sequence length="512" mass="60885">MEELKGYLEKSQSKQQHFLYPLLFLEYIYALAHDHGLNVNGSIFYEPAEMSGYDNKFSSLLVKRLITRMYQQNFLINSVNDSNQNRFVGHNKNFYSQMISEGFAVIVEIPFSLRLVSSLEEKKEIPKSQNLRSIHSIFPFFEDKLSHLNYVSDILIPYPVHLKILVQILQCWIQDVPSLHLLRFFFHEYHNWNNIITPKKSSYGFSKENPRLFRFLYNSYVVECESILVFLRKQSSYLRSTSSGTFLERTHFYEKIEQQHLVVLCYNDFQKILWLFKDPFMHYVRYQGKSILASKGTHFLMKKWKSYFVNFWQCHFHFWSQPRRIHINQFSKFSFYFLGYLSNVPINPSAVKSQMLENSFLIDTVTKKFETIVPIVPMIGSLSKAKFCNVLGNPISKPVWADLLDSDIIDRFGRICRNLSHYYSGSSKKQSLYRIKYILRLSCARTLARKHKSTVRAFMQRLGSEFLEEFFTEEEKVISLALPRISYPLHKLYRERIWYXDIIRINDLVNHL</sequence>
<evidence type="ECO:0000255" key="1">
    <source>
        <dbReference type="HAMAP-Rule" id="MF_01390"/>
    </source>
</evidence>
<accession>Q9GHE5</accession>
<dbReference type="EMBL" id="AB040178">
    <property type="protein sequence ID" value="BAB16786.1"/>
    <property type="molecule type" value="Genomic_DNA"/>
</dbReference>
<dbReference type="GO" id="GO:0009507">
    <property type="term" value="C:chloroplast"/>
    <property type="evidence" value="ECO:0007669"/>
    <property type="project" value="UniProtKB-SubCell"/>
</dbReference>
<dbReference type="GO" id="GO:0003723">
    <property type="term" value="F:RNA binding"/>
    <property type="evidence" value="ECO:0007669"/>
    <property type="project" value="UniProtKB-KW"/>
</dbReference>
<dbReference type="GO" id="GO:0006397">
    <property type="term" value="P:mRNA processing"/>
    <property type="evidence" value="ECO:0007669"/>
    <property type="project" value="UniProtKB-KW"/>
</dbReference>
<dbReference type="GO" id="GO:0008380">
    <property type="term" value="P:RNA splicing"/>
    <property type="evidence" value="ECO:0007669"/>
    <property type="project" value="UniProtKB-UniRule"/>
</dbReference>
<dbReference type="GO" id="GO:0008033">
    <property type="term" value="P:tRNA processing"/>
    <property type="evidence" value="ECO:0007669"/>
    <property type="project" value="UniProtKB-KW"/>
</dbReference>
<dbReference type="HAMAP" id="MF_01390">
    <property type="entry name" value="MatK"/>
    <property type="match status" value="1"/>
</dbReference>
<dbReference type="InterPro" id="IPR024937">
    <property type="entry name" value="Domain_X"/>
</dbReference>
<dbReference type="InterPro" id="IPR002866">
    <property type="entry name" value="Maturase_MatK"/>
</dbReference>
<dbReference type="InterPro" id="IPR024942">
    <property type="entry name" value="Maturase_MatK_N"/>
</dbReference>
<dbReference type="PANTHER" id="PTHR34811">
    <property type="entry name" value="MATURASE K"/>
    <property type="match status" value="1"/>
</dbReference>
<dbReference type="PANTHER" id="PTHR34811:SF1">
    <property type="entry name" value="MATURASE K"/>
    <property type="match status" value="1"/>
</dbReference>
<dbReference type="Pfam" id="PF01348">
    <property type="entry name" value="Intron_maturas2"/>
    <property type="match status" value="1"/>
</dbReference>
<dbReference type="Pfam" id="PF01824">
    <property type="entry name" value="MatK_N"/>
    <property type="match status" value="1"/>
</dbReference>
<proteinExistence type="inferred from homology"/>
<feature type="chain" id="PRO_0000143795" description="Maturase K">
    <location>
        <begin position="1"/>
        <end position="512"/>
    </location>
</feature>
<geneLocation type="chloroplast"/>
<reference key="1">
    <citation type="journal article" date="2000" name="Plant Biol.">
        <title>A phylogenetic analysis of the plastid matK gene with emphasis on Melanthiaceae sensu lato.</title>
        <authorList>
            <person name="Fuse S."/>
            <person name="Tamura M.N."/>
        </authorList>
    </citation>
    <scope>NUCLEOTIDE SEQUENCE [GENOMIC DNA]</scope>
</reference>
<organism>
    <name type="scientific">Zantedeschia aethiopica</name>
    <name type="common">White calla lily</name>
    <name type="synonym">Calla aethiopica</name>
    <dbReference type="NCBI Taxonomy" id="69721"/>
    <lineage>
        <taxon>Eukaryota</taxon>
        <taxon>Viridiplantae</taxon>
        <taxon>Streptophyta</taxon>
        <taxon>Embryophyta</taxon>
        <taxon>Tracheophyta</taxon>
        <taxon>Spermatophyta</taxon>
        <taxon>Magnoliopsida</taxon>
        <taxon>Liliopsida</taxon>
        <taxon>Araceae</taxon>
        <taxon>Philodendroideae</taxon>
        <taxon>Zantedeschieae</taxon>
        <taxon>Zantedeschia</taxon>
    </lineage>
</organism>
<comment type="function">
    <text evidence="1">Usually encoded in the trnK tRNA gene intron. Probably assists in splicing its own and other chloroplast group II introns.</text>
</comment>
<comment type="subcellular location">
    <subcellularLocation>
        <location>Plastid</location>
        <location>Chloroplast</location>
    </subcellularLocation>
</comment>
<comment type="similarity">
    <text evidence="1">Belongs to the intron maturase 2 family. MatK subfamily.</text>
</comment>